<sequence length="407" mass="45108">MKQQLLERFLSYVSFNTQSDGRSQNVPSTHSQFVFAQHLRQELVSLGFEDVQLSDKGYLTATVPANVEGVACIGFIAHLDTAPDYSGENVSPQIIENYNGEDIQLGLEEVLSPKQFSSLNQYIGQTLITTDGSSLLGGDDKAGIAEIISALHHLLTHPEIPHGKIRLCFTPDEEIGRGADHFDVESFGAQWAYTIDGGQVGELEYENFNAATAVVTAMGNNCHPGTAYGVMVNAQTIAARFHAKMPLKDTPEHSRDYDGFFHLLGMEGVTEKATLTYIIRDFDLELFEQRKRWLTELVEKYNAELSIGQLTIDIQDSYLNMKQQVLPHPHIIDIAKQAMQNLAIEPIIKPIRGGTDGSRLSYMGLPCPNLFTGGHNFHGKHEYVCVESMVKATETIVEIAKLTAQHK</sequence>
<dbReference type="EC" id="3.4.11.4" evidence="1"/>
<dbReference type="EMBL" id="CP000931">
    <property type="protein sequence ID" value="ABZ77581.1"/>
    <property type="molecule type" value="Genomic_DNA"/>
</dbReference>
<dbReference type="RefSeq" id="WP_012278107.1">
    <property type="nucleotide sequence ID" value="NC_010334.1"/>
</dbReference>
<dbReference type="SMR" id="B0TPD4"/>
<dbReference type="STRING" id="458817.Shal_3033"/>
<dbReference type="MEROPS" id="M20.003"/>
<dbReference type="KEGG" id="shl:Shal_3033"/>
<dbReference type="eggNOG" id="COG2195">
    <property type="taxonomic scope" value="Bacteria"/>
</dbReference>
<dbReference type="HOGENOM" id="CLU_053676_0_0_6"/>
<dbReference type="OrthoDB" id="9804934at2"/>
<dbReference type="Proteomes" id="UP000001317">
    <property type="component" value="Chromosome"/>
</dbReference>
<dbReference type="GO" id="GO:0005829">
    <property type="term" value="C:cytosol"/>
    <property type="evidence" value="ECO:0007669"/>
    <property type="project" value="TreeGrafter"/>
</dbReference>
<dbReference type="GO" id="GO:0008237">
    <property type="term" value="F:metallopeptidase activity"/>
    <property type="evidence" value="ECO:0007669"/>
    <property type="project" value="UniProtKB-KW"/>
</dbReference>
<dbReference type="GO" id="GO:0045148">
    <property type="term" value="F:tripeptide aminopeptidase activity"/>
    <property type="evidence" value="ECO:0007669"/>
    <property type="project" value="UniProtKB-UniRule"/>
</dbReference>
<dbReference type="GO" id="GO:0008270">
    <property type="term" value="F:zinc ion binding"/>
    <property type="evidence" value="ECO:0007669"/>
    <property type="project" value="UniProtKB-UniRule"/>
</dbReference>
<dbReference type="GO" id="GO:0043171">
    <property type="term" value="P:peptide catabolic process"/>
    <property type="evidence" value="ECO:0007669"/>
    <property type="project" value="UniProtKB-UniRule"/>
</dbReference>
<dbReference type="GO" id="GO:0006508">
    <property type="term" value="P:proteolysis"/>
    <property type="evidence" value="ECO:0007669"/>
    <property type="project" value="UniProtKB-UniRule"/>
</dbReference>
<dbReference type="CDD" id="cd03892">
    <property type="entry name" value="M20_peptT"/>
    <property type="match status" value="1"/>
</dbReference>
<dbReference type="Gene3D" id="3.30.70.360">
    <property type="match status" value="1"/>
</dbReference>
<dbReference type="Gene3D" id="3.40.630.10">
    <property type="entry name" value="Zn peptidases"/>
    <property type="match status" value="1"/>
</dbReference>
<dbReference type="HAMAP" id="MF_00550">
    <property type="entry name" value="Aminopeptidase_M20"/>
    <property type="match status" value="1"/>
</dbReference>
<dbReference type="InterPro" id="IPR001261">
    <property type="entry name" value="ArgE/DapE_CS"/>
</dbReference>
<dbReference type="InterPro" id="IPR036264">
    <property type="entry name" value="Bact_exopeptidase_dim_dom"/>
</dbReference>
<dbReference type="InterPro" id="IPR002933">
    <property type="entry name" value="Peptidase_M20"/>
</dbReference>
<dbReference type="InterPro" id="IPR011650">
    <property type="entry name" value="Peptidase_M20_dimer"/>
</dbReference>
<dbReference type="InterPro" id="IPR010161">
    <property type="entry name" value="Peptidase_M20B"/>
</dbReference>
<dbReference type="NCBIfam" id="TIGR01882">
    <property type="entry name" value="peptidase-T"/>
    <property type="match status" value="1"/>
</dbReference>
<dbReference type="NCBIfam" id="NF003976">
    <property type="entry name" value="PRK05469.1"/>
    <property type="match status" value="1"/>
</dbReference>
<dbReference type="NCBIfam" id="NF009920">
    <property type="entry name" value="PRK13381.1"/>
    <property type="match status" value="1"/>
</dbReference>
<dbReference type="PANTHER" id="PTHR42994">
    <property type="entry name" value="PEPTIDASE T"/>
    <property type="match status" value="1"/>
</dbReference>
<dbReference type="PANTHER" id="PTHR42994:SF1">
    <property type="entry name" value="PEPTIDASE T"/>
    <property type="match status" value="1"/>
</dbReference>
<dbReference type="Pfam" id="PF07687">
    <property type="entry name" value="M20_dimer"/>
    <property type="match status" value="1"/>
</dbReference>
<dbReference type="Pfam" id="PF01546">
    <property type="entry name" value="Peptidase_M20"/>
    <property type="match status" value="1"/>
</dbReference>
<dbReference type="PIRSF" id="PIRSF037215">
    <property type="entry name" value="Peptidase_M20B"/>
    <property type="match status" value="1"/>
</dbReference>
<dbReference type="SUPFAM" id="SSF55031">
    <property type="entry name" value="Bacterial exopeptidase dimerisation domain"/>
    <property type="match status" value="1"/>
</dbReference>
<dbReference type="SUPFAM" id="SSF53187">
    <property type="entry name" value="Zn-dependent exopeptidases"/>
    <property type="match status" value="1"/>
</dbReference>
<dbReference type="PROSITE" id="PS00758">
    <property type="entry name" value="ARGE_DAPE_CPG2_1"/>
    <property type="match status" value="1"/>
</dbReference>
<feature type="chain" id="PRO_1000200893" description="Peptidase T">
    <location>
        <begin position="1"/>
        <end position="407"/>
    </location>
</feature>
<feature type="active site" evidence="1">
    <location>
        <position position="80"/>
    </location>
</feature>
<feature type="active site" description="Proton acceptor" evidence="1">
    <location>
        <position position="173"/>
    </location>
</feature>
<feature type="binding site" evidence="1">
    <location>
        <position position="78"/>
    </location>
    <ligand>
        <name>Zn(2+)</name>
        <dbReference type="ChEBI" id="CHEBI:29105"/>
        <label>1</label>
    </ligand>
</feature>
<feature type="binding site" evidence="1">
    <location>
        <position position="139"/>
    </location>
    <ligand>
        <name>Zn(2+)</name>
        <dbReference type="ChEBI" id="CHEBI:29105"/>
        <label>1</label>
    </ligand>
</feature>
<feature type="binding site" evidence="1">
    <location>
        <position position="139"/>
    </location>
    <ligand>
        <name>Zn(2+)</name>
        <dbReference type="ChEBI" id="CHEBI:29105"/>
        <label>2</label>
    </ligand>
</feature>
<feature type="binding site" evidence="1">
    <location>
        <position position="174"/>
    </location>
    <ligand>
        <name>Zn(2+)</name>
        <dbReference type="ChEBI" id="CHEBI:29105"/>
        <label>2</label>
    </ligand>
</feature>
<feature type="binding site" evidence="1">
    <location>
        <position position="196"/>
    </location>
    <ligand>
        <name>Zn(2+)</name>
        <dbReference type="ChEBI" id="CHEBI:29105"/>
        <label>1</label>
    </ligand>
</feature>
<feature type="binding site" evidence="1">
    <location>
        <position position="378"/>
    </location>
    <ligand>
        <name>Zn(2+)</name>
        <dbReference type="ChEBI" id="CHEBI:29105"/>
        <label>2</label>
    </ligand>
</feature>
<evidence type="ECO:0000255" key="1">
    <source>
        <dbReference type="HAMAP-Rule" id="MF_00550"/>
    </source>
</evidence>
<comment type="function">
    <text evidence="1">Cleaves the N-terminal amino acid of tripeptides.</text>
</comment>
<comment type="catalytic activity">
    <reaction evidence="1">
        <text>Release of the N-terminal residue from a tripeptide.</text>
        <dbReference type="EC" id="3.4.11.4"/>
    </reaction>
</comment>
<comment type="cofactor">
    <cofactor evidence="1">
        <name>Zn(2+)</name>
        <dbReference type="ChEBI" id="CHEBI:29105"/>
    </cofactor>
    <text evidence="1">Binds 2 Zn(2+) ions per subunit.</text>
</comment>
<comment type="subcellular location">
    <subcellularLocation>
        <location evidence="1">Cytoplasm</location>
    </subcellularLocation>
</comment>
<comment type="similarity">
    <text evidence="1">Belongs to the peptidase M20B family.</text>
</comment>
<organism>
    <name type="scientific">Shewanella halifaxensis (strain HAW-EB4)</name>
    <dbReference type="NCBI Taxonomy" id="458817"/>
    <lineage>
        <taxon>Bacteria</taxon>
        <taxon>Pseudomonadati</taxon>
        <taxon>Pseudomonadota</taxon>
        <taxon>Gammaproteobacteria</taxon>
        <taxon>Alteromonadales</taxon>
        <taxon>Shewanellaceae</taxon>
        <taxon>Shewanella</taxon>
    </lineage>
</organism>
<gene>
    <name evidence="1" type="primary">pepT</name>
    <name type="ordered locus">Shal_3033</name>
</gene>
<proteinExistence type="inferred from homology"/>
<name>PEPT_SHEHH</name>
<keyword id="KW-0031">Aminopeptidase</keyword>
<keyword id="KW-0963">Cytoplasm</keyword>
<keyword id="KW-0378">Hydrolase</keyword>
<keyword id="KW-0479">Metal-binding</keyword>
<keyword id="KW-0482">Metalloprotease</keyword>
<keyword id="KW-0645">Protease</keyword>
<keyword id="KW-0862">Zinc</keyword>
<protein>
    <recommendedName>
        <fullName evidence="1">Peptidase T</fullName>
        <ecNumber evidence="1">3.4.11.4</ecNumber>
    </recommendedName>
    <alternativeName>
        <fullName evidence="1">Aminotripeptidase</fullName>
        <shortName evidence="1">Tripeptidase</shortName>
    </alternativeName>
    <alternativeName>
        <fullName evidence="1">Tripeptide aminopeptidase</fullName>
    </alternativeName>
</protein>
<accession>B0TPD4</accession>
<reference key="1">
    <citation type="submission" date="2008-01" db="EMBL/GenBank/DDBJ databases">
        <title>Complete sequence of Shewanella halifaxensis HAW-EB4.</title>
        <authorList>
            <consortium name="US DOE Joint Genome Institute"/>
            <person name="Copeland A."/>
            <person name="Lucas S."/>
            <person name="Lapidus A."/>
            <person name="Glavina del Rio T."/>
            <person name="Dalin E."/>
            <person name="Tice H."/>
            <person name="Bruce D."/>
            <person name="Goodwin L."/>
            <person name="Pitluck S."/>
            <person name="Sims D."/>
            <person name="Brettin T."/>
            <person name="Detter J.C."/>
            <person name="Han C."/>
            <person name="Kuske C.R."/>
            <person name="Schmutz J."/>
            <person name="Larimer F."/>
            <person name="Land M."/>
            <person name="Hauser L."/>
            <person name="Kyrpides N."/>
            <person name="Kim E."/>
            <person name="Zhao J.-S."/>
            <person name="Richardson P."/>
        </authorList>
    </citation>
    <scope>NUCLEOTIDE SEQUENCE [LARGE SCALE GENOMIC DNA]</scope>
    <source>
        <strain>HAW-EB4</strain>
    </source>
</reference>